<organism>
    <name type="scientific">Escherichia coli O45:K1 (strain S88 / ExPEC)</name>
    <dbReference type="NCBI Taxonomy" id="585035"/>
    <lineage>
        <taxon>Bacteria</taxon>
        <taxon>Pseudomonadati</taxon>
        <taxon>Pseudomonadota</taxon>
        <taxon>Gammaproteobacteria</taxon>
        <taxon>Enterobacterales</taxon>
        <taxon>Enterobacteriaceae</taxon>
        <taxon>Escherichia</taxon>
    </lineage>
</organism>
<dbReference type="EMBL" id="CU928161">
    <property type="protein sequence ID" value="CAR02309.1"/>
    <property type="molecule type" value="Genomic_DNA"/>
</dbReference>
<dbReference type="RefSeq" id="WP_000877153.1">
    <property type="nucleotide sequence ID" value="NC_011742.1"/>
</dbReference>
<dbReference type="SMR" id="B7MIA9"/>
<dbReference type="KEGG" id="ecz:ECS88_0977"/>
<dbReference type="HOGENOM" id="CLU_142157_0_0_6"/>
<dbReference type="Proteomes" id="UP000000747">
    <property type="component" value="Chromosome"/>
</dbReference>
<dbReference type="GO" id="GO:0005737">
    <property type="term" value="C:cytoplasm"/>
    <property type="evidence" value="ECO:0007669"/>
    <property type="project" value="UniProtKB-SubCell"/>
</dbReference>
<dbReference type="GO" id="GO:0043565">
    <property type="term" value="F:sequence-specific DNA binding"/>
    <property type="evidence" value="ECO:0007669"/>
    <property type="project" value="UniProtKB-UniRule"/>
</dbReference>
<dbReference type="GO" id="GO:0051301">
    <property type="term" value="P:cell division"/>
    <property type="evidence" value="ECO:0007669"/>
    <property type="project" value="UniProtKB-UniRule"/>
</dbReference>
<dbReference type="GO" id="GO:0006355">
    <property type="term" value="P:regulation of DNA-templated transcription"/>
    <property type="evidence" value="ECO:0007669"/>
    <property type="project" value="InterPro"/>
</dbReference>
<dbReference type="FunFam" id="1.10.1220.10:FF:000004">
    <property type="entry name" value="Macrodomain Ter protein"/>
    <property type="match status" value="1"/>
</dbReference>
<dbReference type="FunFam" id="1.20.1270.380:FF:000001">
    <property type="entry name" value="Macrodomain Ter protein"/>
    <property type="match status" value="1"/>
</dbReference>
<dbReference type="Gene3D" id="1.20.1270.380">
    <property type="entry name" value="MatP, N-terminal domain"/>
    <property type="match status" value="1"/>
</dbReference>
<dbReference type="Gene3D" id="1.10.1220.10">
    <property type="entry name" value="Met repressor-like"/>
    <property type="match status" value="1"/>
</dbReference>
<dbReference type="HAMAP" id="MF_01073">
    <property type="entry name" value="MatP"/>
    <property type="match status" value="1"/>
</dbReference>
<dbReference type="InterPro" id="IPR013321">
    <property type="entry name" value="Arc_rbn_hlx_hlx"/>
</dbReference>
<dbReference type="InterPro" id="IPR009390">
    <property type="entry name" value="MatP"/>
</dbReference>
<dbReference type="InterPro" id="IPR035375">
    <property type="entry name" value="MatP_C"/>
</dbReference>
<dbReference type="InterPro" id="IPR035087">
    <property type="entry name" value="MatP_N"/>
</dbReference>
<dbReference type="InterPro" id="IPR038339">
    <property type="entry name" value="MatP_N_sf"/>
</dbReference>
<dbReference type="NCBIfam" id="NF003471">
    <property type="entry name" value="PRK05097.1"/>
    <property type="match status" value="1"/>
</dbReference>
<dbReference type="Pfam" id="PF06303">
    <property type="entry name" value="MatP"/>
    <property type="match status" value="1"/>
</dbReference>
<dbReference type="Pfam" id="PF17414">
    <property type="entry name" value="MatP_C"/>
    <property type="match status" value="1"/>
</dbReference>
<protein>
    <recommendedName>
        <fullName evidence="1">Macrodomain Ter protein</fullName>
    </recommendedName>
</protein>
<proteinExistence type="inferred from homology"/>
<feature type="chain" id="PRO_1000136662" description="Macrodomain Ter protein">
    <location>
        <begin position="1"/>
        <end position="150"/>
    </location>
</feature>
<name>MATP_ECO45</name>
<keyword id="KW-0131">Cell cycle</keyword>
<keyword id="KW-0132">Cell division</keyword>
<keyword id="KW-0963">Cytoplasm</keyword>
<keyword id="KW-0238">DNA-binding</keyword>
<keyword id="KW-1185">Reference proteome</keyword>
<reference key="1">
    <citation type="journal article" date="2009" name="PLoS Genet.">
        <title>Organised genome dynamics in the Escherichia coli species results in highly diverse adaptive paths.</title>
        <authorList>
            <person name="Touchon M."/>
            <person name="Hoede C."/>
            <person name="Tenaillon O."/>
            <person name="Barbe V."/>
            <person name="Baeriswyl S."/>
            <person name="Bidet P."/>
            <person name="Bingen E."/>
            <person name="Bonacorsi S."/>
            <person name="Bouchier C."/>
            <person name="Bouvet O."/>
            <person name="Calteau A."/>
            <person name="Chiapello H."/>
            <person name="Clermont O."/>
            <person name="Cruveiller S."/>
            <person name="Danchin A."/>
            <person name="Diard M."/>
            <person name="Dossat C."/>
            <person name="Karoui M.E."/>
            <person name="Frapy E."/>
            <person name="Garry L."/>
            <person name="Ghigo J.M."/>
            <person name="Gilles A.M."/>
            <person name="Johnson J."/>
            <person name="Le Bouguenec C."/>
            <person name="Lescat M."/>
            <person name="Mangenot S."/>
            <person name="Martinez-Jehanne V."/>
            <person name="Matic I."/>
            <person name="Nassif X."/>
            <person name="Oztas S."/>
            <person name="Petit M.A."/>
            <person name="Pichon C."/>
            <person name="Rouy Z."/>
            <person name="Ruf C.S."/>
            <person name="Schneider D."/>
            <person name="Tourret J."/>
            <person name="Vacherie B."/>
            <person name="Vallenet D."/>
            <person name="Medigue C."/>
            <person name="Rocha E.P.C."/>
            <person name="Denamur E."/>
        </authorList>
    </citation>
    <scope>NUCLEOTIDE SEQUENCE [LARGE SCALE GENOMIC DNA]</scope>
    <source>
        <strain>S88 / ExPEC</strain>
    </source>
</reference>
<gene>
    <name evidence="1" type="primary">matP</name>
    <name type="ordered locus">ECS88_0977</name>
</gene>
<evidence type="ECO:0000255" key="1">
    <source>
        <dbReference type="HAMAP-Rule" id="MF_01073"/>
    </source>
</evidence>
<accession>B7MIA9</accession>
<comment type="function">
    <text evidence="1">Required for spatial organization of the terminus region of the chromosome (Ter macrodomain) during the cell cycle. Prevents early segregation of duplicated Ter macrodomains during cell division. Binds specifically to matS, which is a 13 bp signature motif repeated within the Ter macrodomain.</text>
</comment>
<comment type="subunit">
    <text evidence="1">Homodimer.</text>
</comment>
<comment type="subcellular location">
    <subcellularLocation>
        <location evidence="1">Cytoplasm</location>
    </subcellularLocation>
</comment>
<comment type="similarity">
    <text evidence="1">Belongs to the MatP family.</text>
</comment>
<sequence>MKYQQLENLESGWKWKYLVKKHREGELITRYIEASAAQEAVDELLSLENEPVLVNGWIDKHMNPELVNRMKQTIRARRKRHFNAEHQHTRKKSIDLEFIVWQRLAGLAQRRGKTLSETIVQLIEDAENKEKYANKMSSLKQDLQALLGKE</sequence>